<reference key="1">
    <citation type="submission" date="2007-02" db="EMBL/GenBank/DDBJ databases">
        <title>Complete sequence of chromosome of Yersinia pestis Pestoides F.</title>
        <authorList>
            <consortium name="US DOE Joint Genome Institute"/>
            <person name="Copeland A."/>
            <person name="Lucas S."/>
            <person name="Lapidus A."/>
            <person name="Barry K."/>
            <person name="Detter J.C."/>
            <person name="Glavina del Rio T."/>
            <person name="Hammon N."/>
            <person name="Israni S."/>
            <person name="Dalin E."/>
            <person name="Tice H."/>
            <person name="Pitluck S."/>
            <person name="Di Bartolo G."/>
            <person name="Chain P."/>
            <person name="Malfatti S."/>
            <person name="Shin M."/>
            <person name="Vergez L."/>
            <person name="Schmutz J."/>
            <person name="Larimer F."/>
            <person name="Land M."/>
            <person name="Hauser L."/>
            <person name="Worsham P."/>
            <person name="Chu M."/>
            <person name="Bearden S."/>
            <person name="Garcia E."/>
            <person name="Richardson P."/>
        </authorList>
    </citation>
    <scope>NUCLEOTIDE SEQUENCE [LARGE SCALE GENOMIC DNA]</scope>
    <source>
        <strain>Pestoides F</strain>
    </source>
</reference>
<accession>A4TQ64</accession>
<sequence>MWIGVISLFPEMFRAITDYGVTGRAVKNGLLSVQCWSPRDFTYDRHRTVDDRPYGGGPGMLMMVQPLREAIHAAKAAAGEGAKVIYLSPQGRKLDQQGVCELAMNQKMILVCGRYEGVDERVIKTEIDEEWSIGDYVLSGGELPAMTLIDSVSRFIPGVLGHHASAEEDSFVDGLLDCPHYTRPEVLEGMEVPPVLLSGNHAEIRRWRLKQSLGRTWLRRPELLESLALTDEQMVLLAEFQREHKP</sequence>
<keyword id="KW-0963">Cytoplasm</keyword>
<keyword id="KW-0489">Methyltransferase</keyword>
<keyword id="KW-0949">S-adenosyl-L-methionine</keyword>
<keyword id="KW-0808">Transferase</keyword>
<keyword id="KW-0819">tRNA processing</keyword>
<comment type="function">
    <text evidence="1">Specifically methylates guanosine-37 in various tRNAs.</text>
</comment>
<comment type="catalytic activity">
    <reaction evidence="1">
        <text>guanosine(37) in tRNA + S-adenosyl-L-methionine = N(1)-methylguanosine(37) in tRNA + S-adenosyl-L-homocysteine + H(+)</text>
        <dbReference type="Rhea" id="RHEA:36899"/>
        <dbReference type="Rhea" id="RHEA-COMP:10145"/>
        <dbReference type="Rhea" id="RHEA-COMP:10147"/>
        <dbReference type="ChEBI" id="CHEBI:15378"/>
        <dbReference type="ChEBI" id="CHEBI:57856"/>
        <dbReference type="ChEBI" id="CHEBI:59789"/>
        <dbReference type="ChEBI" id="CHEBI:73542"/>
        <dbReference type="ChEBI" id="CHEBI:74269"/>
        <dbReference type="EC" id="2.1.1.228"/>
    </reaction>
</comment>
<comment type="subunit">
    <text evidence="1">Homodimer.</text>
</comment>
<comment type="subcellular location">
    <subcellularLocation>
        <location evidence="1">Cytoplasm</location>
    </subcellularLocation>
</comment>
<comment type="similarity">
    <text evidence="1">Belongs to the RNA methyltransferase TrmD family.</text>
</comment>
<feature type="chain" id="PRO_1000006542" description="tRNA (guanine-N(1)-)-methyltransferase">
    <location>
        <begin position="1"/>
        <end position="246"/>
    </location>
</feature>
<feature type="binding site" evidence="1">
    <location>
        <position position="113"/>
    </location>
    <ligand>
        <name>S-adenosyl-L-methionine</name>
        <dbReference type="ChEBI" id="CHEBI:59789"/>
    </ligand>
</feature>
<feature type="binding site" evidence="1">
    <location>
        <begin position="133"/>
        <end position="138"/>
    </location>
    <ligand>
        <name>S-adenosyl-L-methionine</name>
        <dbReference type="ChEBI" id="CHEBI:59789"/>
    </ligand>
</feature>
<name>TRMD_YERPP</name>
<gene>
    <name evidence="1" type="primary">trmD</name>
    <name type="ordered locus">YPDSF_3068</name>
</gene>
<evidence type="ECO:0000255" key="1">
    <source>
        <dbReference type="HAMAP-Rule" id="MF_00605"/>
    </source>
</evidence>
<protein>
    <recommendedName>
        <fullName evidence="1">tRNA (guanine-N(1)-)-methyltransferase</fullName>
        <ecNumber evidence="1">2.1.1.228</ecNumber>
    </recommendedName>
    <alternativeName>
        <fullName evidence="1">M1G-methyltransferase</fullName>
    </alternativeName>
    <alternativeName>
        <fullName evidence="1">tRNA [GM37] methyltransferase</fullName>
    </alternativeName>
</protein>
<dbReference type="EC" id="2.1.1.228" evidence="1"/>
<dbReference type="EMBL" id="CP000668">
    <property type="protein sequence ID" value="ABP41426.1"/>
    <property type="molecule type" value="Genomic_DNA"/>
</dbReference>
<dbReference type="RefSeq" id="WP_002222284.1">
    <property type="nucleotide sequence ID" value="NZ_CP009715.1"/>
</dbReference>
<dbReference type="SMR" id="A4TQ64"/>
<dbReference type="GeneID" id="57975424"/>
<dbReference type="KEGG" id="ypp:YPDSF_3068"/>
<dbReference type="PATRIC" id="fig|386656.14.peg.1292"/>
<dbReference type="GO" id="GO:0005829">
    <property type="term" value="C:cytosol"/>
    <property type="evidence" value="ECO:0007669"/>
    <property type="project" value="TreeGrafter"/>
</dbReference>
<dbReference type="GO" id="GO:0052906">
    <property type="term" value="F:tRNA (guanine(37)-N1)-methyltransferase activity"/>
    <property type="evidence" value="ECO:0007669"/>
    <property type="project" value="UniProtKB-UniRule"/>
</dbReference>
<dbReference type="GO" id="GO:0002939">
    <property type="term" value="P:tRNA N1-guanine methylation"/>
    <property type="evidence" value="ECO:0007669"/>
    <property type="project" value="TreeGrafter"/>
</dbReference>
<dbReference type="CDD" id="cd18080">
    <property type="entry name" value="TrmD-like"/>
    <property type="match status" value="1"/>
</dbReference>
<dbReference type="FunFam" id="1.10.1270.20:FF:000001">
    <property type="entry name" value="tRNA (guanine-N(1)-)-methyltransferase"/>
    <property type="match status" value="1"/>
</dbReference>
<dbReference type="FunFam" id="3.40.1280.10:FF:000001">
    <property type="entry name" value="tRNA (guanine-N(1)-)-methyltransferase"/>
    <property type="match status" value="1"/>
</dbReference>
<dbReference type="Gene3D" id="3.40.1280.10">
    <property type="match status" value="1"/>
</dbReference>
<dbReference type="Gene3D" id="1.10.1270.20">
    <property type="entry name" value="tRNA(m1g37)methyltransferase, domain 2"/>
    <property type="match status" value="1"/>
</dbReference>
<dbReference type="HAMAP" id="MF_00605">
    <property type="entry name" value="TrmD"/>
    <property type="match status" value="1"/>
</dbReference>
<dbReference type="InterPro" id="IPR029028">
    <property type="entry name" value="Alpha/beta_knot_MTases"/>
</dbReference>
<dbReference type="InterPro" id="IPR023148">
    <property type="entry name" value="tRNA_m1G_MeTrfase_C_sf"/>
</dbReference>
<dbReference type="InterPro" id="IPR002649">
    <property type="entry name" value="tRNA_m1G_MeTrfase_TrmD"/>
</dbReference>
<dbReference type="InterPro" id="IPR029026">
    <property type="entry name" value="tRNA_m1G_MTases_N"/>
</dbReference>
<dbReference type="InterPro" id="IPR016009">
    <property type="entry name" value="tRNA_MeTrfase_TRMD/TRM10"/>
</dbReference>
<dbReference type="NCBIfam" id="NF000648">
    <property type="entry name" value="PRK00026.1"/>
    <property type="match status" value="1"/>
</dbReference>
<dbReference type="NCBIfam" id="TIGR00088">
    <property type="entry name" value="trmD"/>
    <property type="match status" value="1"/>
</dbReference>
<dbReference type="PANTHER" id="PTHR46417">
    <property type="entry name" value="TRNA (GUANINE-N(1)-)-METHYLTRANSFERASE"/>
    <property type="match status" value="1"/>
</dbReference>
<dbReference type="PANTHER" id="PTHR46417:SF1">
    <property type="entry name" value="TRNA (GUANINE-N(1)-)-METHYLTRANSFERASE"/>
    <property type="match status" value="1"/>
</dbReference>
<dbReference type="Pfam" id="PF01746">
    <property type="entry name" value="tRNA_m1G_MT"/>
    <property type="match status" value="1"/>
</dbReference>
<dbReference type="PIRSF" id="PIRSF000386">
    <property type="entry name" value="tRNA_mtase"/>
    <property type="match status" value="1"/>
</dbReference>
<dbReference type="SUPFAM" id="SSF75217">
    <property type="entry name" value="alpha/beta knot"/>
    <property type="match status" value="1"/>
</dbReference>
<proteinExistence type="inferred from homology"/>
<organism>
    <name type="scientific">Yersinia pestis (strain Pestoides F)</name>
    <dbReference type="NCBI Taxonomy" id="386656"/>
    <lineage>
        <taxon>Bacteria</taxon>
        <taxon>Pseudomonadati</taxon>
        <taxon>Pseudomonadota</taxon>
        <taxon>Gammaproteobacteria</taxon>
        <taxon>Enterobacterales</taxon>
        <taxon>Yersiniaceae</taxon>
        <taxon>Yersinia</taxon>
    </lineage>
</organism>